<name>Y4BH_SINFN</name>
<reference key="1">
    <citation type="journal article" date="1997" name="Nature">
        <title>Molecular basis of symbiosis between Rhizobium and legumes.</title>
        <authorList>
            <person name="Freiberg C.A."/>
            <person name="Fellay R."/>
            <person name="Bairoch A."/>
            <person name="Broughton W.J."/>
            <person name="Rosenthal A."/>
            <person name="Perret X."/>
        </authorList>
    </citation>
    <scope>NUCLEOTIDE SEQUENCE [LARGE SCALE GENOMIC DNA]</scope>
    <source>
        <strain>NBRC 101917 / NGR234</strain>
    </source>
</reference>
<reference key="2">
    <citation type="journal article" date="2009" name="Appl. Environ. Microbiol.">
        <title>Rhizobium sp. strain NGR234 possesses a remarkable number of secretion systems.</title>
        <authorList>
            <person name="Schmeisser C."/>
            <person name="Liesegang H."/>
            <person name="Krysciak D."/>
            <person name="Bakkou N."/>
            <person name="Le Quere A."/>
            <person name="Wollherr A."/>
            <person name="Heinemeyer I."/>
            <person name="Morgenstern B."/>
            <person name="Pommerening-Roeser A."/>
            <person name="Flores M."/>
            <person name="Palacios R."/>
            <person name="Brenner S."/>
            <person name="Gottschalk G."/>
            <person name="Schmitz R.A."/>
            <person name="Broughton W.J."/>
            <person name="Perret X."/>
            <person name="Strittmatter A.W."/>
            <person name="Streit W.R."/>
        </authorList>
    </citation>
    <scope>NUCLEOTIDE SEQUENCE [LARGE SCALE GENOMIC DNA]</scope>
    <source>
        <strain>NBRC 101917 / NGR234</strain>
    </source>
</reference>
<protein>
    <recommendedName>
        <fullName>Uncharacterized protein y4bH</fullName>
    </recommendedName>
</protein>
<proteinExistence type="predicted"/>
<gene>
    <name type="ordered locus">NGR_a00220</name>
    <name type="ORF">y4bH</name>
</gene>
<accession>P55375</accession>
<geneLocation type="plasmid">
    <name>sym pNGR234a</name>
</geneLocation>
<feature type="chain" id="PRO_0000200807" description="Uncharacterized protein y4bH">
    <location>
        <begin position="1"/>
        <end position="91"/>
    </location>
</feature>
<feature type="transmembrane region" description="Helical" evidence="1">
    <location>
        <begin position="10"/>
        <end position="30"/>
    </location>
</feature>
<feature type="transmembrane region" description="Helical" evidence="1">
    <location>
        <begin position="46"/>
        <end position="66"/>
    </location>
</feature>
<feature type="region of interest" description="Disordered" evidence="2">
    <location>
        <begin position="68"/>
        <end position="91"/>
    </location>
</feature>
<keyword id="KW-1003">Cell membrane</keyword>
<keyword id="KW-0472">Membrane</keyword>
<keyword id="KW-0614">Plasmid</keyword>
<keyword id="KW-1185">Reference proteome</keyword>
<keyword id="KW-0812">Transmembrane</keyword>
<keyword id="KW-1133">Transmembrane helix</keyword>
<comment type="subcellular location">
    <subcellularLocation>
        <location evidence="3">Cell membrane</location>
        <topology evidence="3">Multi-pass membrane protein</topology>
    </subcellularLocation>
</comment>
<organism>
    <name type="scientific">Sinorhizobium fredii (strain NBRC 101917 / NGR234)</name>
    <dbReference type="NCBI Taxonomy" id="394"/>
    <lineage>
        <taxon>Bacteria</taxon>
        <taxon>Pseudomonadati</taxon>
        <taxon>Pseudomonadota</taxon>
        <taxon>Alphaproteobacteria</taxon>
        <taxon>Hyphomicrobiales</taxon>
        <taxon>Rhizobiaceae</taxon>
        <taxon>Sinorhizobium/Ensifer group</taxon>
        <taxon>Sinorhizobium</taxon>
    </lineage>
</organism>
<dbReference type="EMBL" id="U00090">
    <property type="protein sequence ID" value="AAB91623.1"/>
    <property type="molecule type" value="Genomic_DNA"/>
</dbReference>
<dbReference type="RefSeq" id="NP_443785.1">
    <property type="nucleotide sequence ID" value="NC_000914.2"/>
</dbReference>
<dbReference type="KEGG" id="rhi:NGR_a00220"/>
<dbReference type="HOGENOM" id="CLU_2424855_0_0_5"/>
<dbReference type="Proteomes" id="UP000001054">
    <property type="component" value="Plasmid pNGR234a"/>
</dbReference>
<dbReference type="GO" id="GO:0005886">
    <property type="term" value="C:plasma membrane"/>
    <property type="evidence" value="ECO:0007669"/>
    <property type="project" value="UniProtKB-SubCell"/>
</dbReference>
<evidence type="ECO:0000255" key="1"/>
<evidence type="ECO:0000256" key="2">
    <source>
        <dbReference type="SAM" id="MobiDB-lite"/>
    </source>
</evidence>
<evidence type="ECO:0000305" key="3"/>
<sequence length="91" mass="9641">MHYRSQRRSVLFTAPGLIVGALAIGAAGGISVSPGDILALVEKPHLLVAVLFVGAFTGIMVEQALSRMRRQDGARGTARAGRNSARRRMPS</sequence>